<name>BUK_LISMF</name>
<sequence>MSFDVLTINPGSTSTKLAVYQGDKVLFEETVRHTMQELADFNNVQEQFDFRWQVLRRVMDAHGYDVKKLQAVVGRGGLLRPVAGGTYMVTEKMIDDLKENKYGEHASNLGALLAKKLADELTIPSFIVDPVVVDEMQEIARISGNAFIARKSIFHALNHKAAGRKIAKELGKDYEKMNFVIAHLGGGISVAAHRQGKAVDVNNALDGDGPFSPERSGSLPMNDFLEACFSGKWTKRELHELIVGRGGMISYLGTNSMLEVEAKVQAGDVKAIEAFDAMAYQVSKEIGACSVVLQGKVDAIILTGGLARSELFTNKIIEQTNWITSVIIEPGEDELEALNSGVQRVLAGLEKEKEY</sequence>
<dbReference type="EC" id="2.7.2.7" evidence="1"/>
<dbReference type="EMBL" id="AE017262">
    <property type="protein sequence ID" value="AAT04162.1"/>
    <property type="molecule type" value="Genomic_DNA"/>
</dbReference>
<dbReference type="RefSeq" id="WP_003727472.1">
    <property type="nucleotide sequence ID" value="NC_002973.6"/>
</dbReference>
<dbReference type="SMR" id="Q71ZV2"/>
<dbReference type="KEGG" id="lmf:LMOf2365_1387"/>
<dbReference type="HOGENOM" id="CLU_048716_0_0_9"/>
<dbReference type="GO" id="GO:0005737">
    <property type="term" value="C:cytoplasm"/>
    <property type="evidence" value="ECO:0007669"/>
    <property type="project" value="UniProtKB-SubCell"/>
</dbReference>
<dbReference type="GO" id="GO:0008776">
    <property type="term" value="F:acetate kinase activity"/>
    <property type="evidence" value="ECO:0007669"/>
    <property type="project" value="TreeGrafter"/>
</dbReference>
<dbReference type="GO" id="GO:0005524">
    <property type="term" value="F:ATP binding"/>
    <property type="evidence" value="ECO:0007669"/>
    <property type="project" value="UniProtKB-KW"/>
</dbReference>
<dbReference type="GO" id="GO:0047761">
    <property type="term" value="F:butyrate kinase activity"/>
    <property type="evidence" value="ECO:0007669"/>
    <property type="project" value="UniProtKB-UniRule"/>
</dbReference>
<dbReference type="GO" id="GO:0006083">
    <property type="term" value="P:acetate metabolic process"/>
    <property type="evidence" value="ECO:0007669"/>
    <property type="project" value="TreeGrafter"/>
</dbReference>
<dbReference type="CDD" id="cd24011">
    <property type="entry name" value="ASKHA_NBD_BK"/>
    <property type="match status" value="1"/>
</dbReference>
<dbReference type="FunFam" id="3.30.420.40:FF:000233">
    <property type="entry name" value="Probable butyrate kinase"/>
    <property type="match status" value="1"/>
</dbReference>
<dbReference type="Gene3D" id="3.30.420.40">
    <property type="match status" value="2"/>
</dbReference>
<dbReference type="HAMAP" id="MF_00542">
    <property type="entry name" value="Butyrate_kinase"/>
    <property type="match status" value="1"/>
</dbReference>
<dbReference type="InterPro" id="IPR000890">
    <property type="entry name" value="Aliphatic_acid_kin_short-chain"/>
</dbReference>
<dbReference type="InterPro" id="IPR023865">
    <property type="entry name" value="Aliphatic_acid_kinase_CS"/>
</dbReference>
<dbReference type="InterPro" id="IPR043129">
    <property type="entry name" value="ATPase_NBD"/>
</dbReference>
<dbReference type="InterPro" id="IPR011245">
    <property type="entry name" value="Butyrate_kin"/>
</dbReference>
<dbReference type="NCBIfam" id="TIGR02707">
    <property type="entry name" value="butyr_kinase"/>
    <property type="match status" value="1"/>
</dbReference>
<dbReference type="NCBIfam" id="NF002834">
    <property type="entry name" value="PRK03011.1-5"/>
    <property type="match status" value="1"/>
</dbReference>
<dbReference type="PANTHER" id="PTHR21060">
    <property type="entry name" value="ACETATE KINASE"/>
    <property type="match status" value="1"/>
</dbReference>
<dbReference type="PANTHER" id="PTHR21060:SF3">
    <property type="entry name" value="BUTYRATE KINASE 2-RELATED"/>
    <property type="match status" value="1"/>
</dbReference>
<dbReference type="Pfam" id="PF00871">
    <property type="entry name" value="Acetate_kinase"/>
    <property type="match status" value="1"/>
</dbReference>
<dbReference type="PIRSF" id="PIRSF036458">
    <property type="entry name" value="Butyrate_kin"/>
    <property type="match status" value="1"/>
</dbReference>
<dbReference type="PRINTS" id="PR00471">
    <property type="entry name" value="ACETATEKNASE"/>
</dbReference>
<dbReference type="SUPFAM" id="SSF53067">
    <property type="entry name" value="Actin-like ATPase domain"/>
    <property type="match status" value="2"/>
</dbReference>
<dbReference type="PROSITE" id="PS01075">
    <property type="entry name" value="ACETATE_KINASE_1"/>
    <property type="match status" value="1"/>
</dbReference>
<dbReference type="PROSITE" id="PS01076">
    <property type="entry name" value="ACETATE_KINASE_2"/>
    <property type="match status" value="1"/>
</dbReference>
<feature type="chain" id="PRO_0000107671" description="Probable butyrate kinase">
    <location>
        <begin position="1"/>
        <end position="355"/>
    </location>
</feature>
<gene>
    <name evidence="1" type="primary">buk</name>
    <name type="ordered locus">LMOf2365_1387</name>
</gene>
<proteinExistence type="inferred from homology"/>
<protein>
    <recommendedName>
        <fullName evidence="1">Probable butyrate kinase</fullName>
        <shortName evidence="1">BK</shortName>
        <ecNumber evidence="1">2.7.2.7</ecNumber>
    </recommendedName>
    <alternativeName>
        <fullName evidence="1">Branched-chain carboxylic acid kinase</fullName>
    </alternativeName>
</protein>
<accession>Q71ZV2</accession>
<comment type="catalytic activity">
    <reaction evidence="1">
        <text>butanoate + ATP = butanoyl phosphate + ADP</text>
        <dbReference type="Rhea" id="RHEA:13585"/>
        <dbReference type="ChEBI" id="CHEBI:17968"/>
        <dbReference type="ChEBI" id="CHEBI:30616"/>
        <dbReference type="ChEBI" id="CHEBI:58079"/>
        <dbReference type="ChEBI" id="CHEBI:456216"/>
        <dbReference type="EC" id="2.7.2.7"/>
    </reaction>
</comment>
<comment type="subcellular location">
    <subcellularLocation>
        <location evidence="1">Cytoplasm</location>
    </subcellularLocation>
</comment>
<comment type="similarity">
    <text evidence="1">Belongs to the acetokinase family.</text>
</comment>
<reference key="1">
    <citation type="journal article" date="2004" name="Nucleic Acids Res.">
        <title>Whole genome comparisons of serotype 4b and 1/2a strains of the food-borne pathogen Listeria monocytogenes reveal new insights into the core genome components of this species.</title>
        <authorList>
            <person name="Nelson K.E."/>
            <person name="Fouts D.E."/>
            <person name="Mongodin E.F."/>
            <person name="Ravel J."/>
            <person name="DeBoy R.T."/>
            <person name="Kolonay J.F."/>
            <person name="Rasko D.A."/>
            <person name="Angiuoli S.V."/>
            <person name="Gill S.R."/>
            <person name="Paulsen I.T."/>
            <person name="Peterson J.D."/>
            <person name="White O."/>
            <person name="Nelson W.C."/>
            <person name="Nierman W.C."/>
            <person name="Beanan M.J."/>
            <person name="Brinkac L.M."/>
            <person name="Daugherty S.C."/>
            <person name="Dodson R.J."/>
            <person name="Durkin A.S."/>
            <person name="Madupu R."/>
            <person name="Haft D.H."/>
            <person name="Selengut J."/>
            <person name="Van Aken S.E."/>
            <person name="Khouri H.M."/>
            <person name="Fedorova N."/>
            <person name="Forberger H.A."/>
            <person name="Tran B."/>
            <person name="Kathariou S."/>
            <person name="Wonderling L.D."/>
            <person name="Uhlich G.A."/>
            <person name="Bayles D.O."/>
            <person name="Luchansky J.B."/>
            <person name="Fraser C.M."/>
        </authorList>
    </citation>
    <scope>NUCLEOTIDE SEQUENCE [LARGE SCALE GENOMIC DNA]</scope>
    <source>
        <strain>F2365</strain>
    </source>
</reference>
<keyword id="KW-0067">ATP-binding</keyword>
<keyword id="KW-0963">Cytoplasm</keyword>
<keyword id="KW-0418">Kinase</keyword>
<keyword id="KW-0547">Nucleotide-binding</keyword>
<keyword id="KW-0808">Transferase</keyword>
<evidence type="ECO:0000255" key="1">
    <source>
        <dbReference type="HAMAP-Rule" id="MF_00542"/>
    </source>
</evidence>
<organism>
    <name type="scientific">Listeria monocytogenes serotype 4b (strain F2365)</name>
    <dbReference type="NCBI Taxonomy" id="265669"/>
    <lineage>
        <taxon>Bacteria</taxon>
        <taxon>Bacillati</taxon>
        <taxon>Bacillota</taxon>
        <taxon>Bacilli</taxon>
        <taxon>Bacillales</taxon>
        <taxon>Listeriaceae</taxon>
        <taxon>Listeria</taxon>
    </lineage>
</organism>